<gene>
    <name type="primary">Hpcal1</name>
</gene>
<evidence type="ECO:0000250" key="1"/>
<evidence type="ECO:0000250" key="2">
    <source>
        <dbReference type="UniProtKB" id="P37235"/>
    </source>
</evidence>
<evidence type="ECO:0000255" key="3">
    <source>
        <dbReference type="PROSITE-ProRule" id="PRU00448"/>
    </source>
</evidence>
<evidence type="ECO:0000269" key="4">
    <source>
    </source>
</evidence>
<evidence type="ECO:0000305" key="5"/>
<comment type="function">
    <text>May be involved in the calcium-dependent regulation of rhodopsin phosphorylation.</text>
</comment>
<comment type="subcellular location">
    <subcellularLocation>
        <location evidence="2">Membrane</location>
        <topology evidence="2">Lipid-anchor</topology>
    </subcellularLocation>
</comment>
<comment type="tissue specificity">
    <text evidence="4">In neuronal cells, but not as specifically as VILIP-1 or VILIP-2.</text>
</comment>
<comment type="miscellaneous">
    <text evidence="1">Probably binds two or three calcium ions.</text>
</comment>
<comment type="similarity">
    <text evidence="5">Belongs to the recoverin family.</text>
</comment>
<reference key="1">
    <citation type="journal article" date="1993" name="J. Neurochem.">
        <title>Molecular cloning of two additional members of the neural visinin-like Ca(2+)-binding protein gene family.</title>
        <authorList>
            <person name="Kajimoto Y."/>
            <person name="Shirai Y."/>
            <person name="Mukai H."/>
            <person name="Kuno T."/>
            <person name="Tanaka C."/>
        </authorList>
    </citation>
    <scope>NUCLEOTIDE SEQUENCE [MRNA]</scope>
    <scope>TISSUE SPECIFICITY</scope>
    <source>
        <tissue>Brain</tissue>
    </source>
</reference>
<reference key="2">
    <citation type="journal article" date="2004" name="Genome Res.">
        <title>The status, quality, and expansion of the NIH full-length cDNA project: the Mammalian Gene Collection (MGC).</title>
        <authorList>
            <consortium name="The MGC Project Team"/>
        </authorList>
    </citation>
    <scope>NUCLEOTIDE SEQUENCE [LARGE SCALE MRNA]</scope>
    <source>
        <tissue>Brain</tissue>
    </source>
</reference>
<reference key="3">
    <citation type="submission" date="2007-07" db="UniProtKB">
        <authorList>
            <person name="Lubec G."/>
            <person name="Kang S.U."/>
        </authorList>
    </citation>
    <scope>PROTEIN SEQUENCE OF 8-17; 51-94; 119-130; 138-148; 164-171 AND 175-181</scope>
    <scope>IDENTIFICATION BY MASS SPECTROMETRY</scope>
    <source>
        <strain>Sprague-Dawley</strain>
        <tissue>Brain</tissue>
    </source>
</reference>
<organism>
    <name type="scientific">Rattus norvegicus</name>
    <name type="common">Rat</name>
    <dbReference type="NCBI Taxonomy" id="10116"/>
    <lineage>
        <taxon>Eukaryota</taxon>
        <taxon>Metazoa</taxon>
        <taxon>Chordata</taxon>
        <taxon>Craniata</taxon>
        <taxon>Vertebrata</taxon>
        <taxon>Euteleostomi</taxon>
        <taxon>Mammalia</taxon>
        <taxon>Eutheria</taxon>
        <taxon>Euarchontoglires</taxon>
        <taxon>Glires</taxon>
        <taxon>Rodentia</taxon>
        <taxon>Myomorpha</taxon>
        <taxon>Muroidea</taxon>
        <taxon>Muridae</taxon>
        <taxon>Murinae</taxon>
        <taxon>Rattus</taxon>
    </lineage>
</organism>
<feature type="initiator methionine" description="Removed" evidence="2">
    <location>
        <position position="1"/>
    </location>
</feature>
<feature type="chain" id="PRO_0000073774" description="Hippocalcin-like protein 1">
    <location>
        <begin position="2"/>
        <end position="193"/>
    </location>
</feature>
<feature type="domain" description="EF-hand 1" evidence="3">
    <location>
        <begin position="41"/>
        <end position="58"/>
    </location>
</feature>
<feature type="domain" description="EF-hand 2" evidence="3">
    <location>
        <begin position="60"/>
        <end position="95"/>
    </location>
</feature>
<feature type="domain" description="EF-hand 3" evidence="3">
    <location>
        <begin position="96"/>
        <end position="131"/>
    </location>
</feature>
<feature type="domain" description="EF-hand 4" evidence="3">
    <location>
        <begin position="144"/>
        <end position="179"/>
    </location>
</feature>
<feature type="binding site" evidence="3">
    <location>
        <position position="73"/>
    </location>
    <ligand>
        <name>Ca(2+)</name>
        <dbReference type="ChEBI" id="CHEBI:29108"/>
        <label>1</label>
    </ligand>
</feature>
<feature type="binding site" evidence="3">
    <location>
        <position position="75"/>
    </location>
    <ligand>
        <name>Ca(2+)</name>
        <dbReference type="ChEBI" id="CHEBI:29108"/>
        <label>1</label>
    </ligand>
</feature>
<feature type="binding site" evidence="3">
    <location>
        <position position="77"/>
    </location>
    <ligand>
        <name>Ca(2+)</name>
        <dbReference type="ChEBI" id="CHEBI:29108"/>
        <label>1</label>
    </ligand>
</feature>
<feature type="binding site" evidence="3">
    <location>
        <position position="79"/>
    </location>
    <ligand>
        <name>Ca(2+)</name>
        <dbReference type="ChEBI" id="CHEBI:29108"/>
        <label>1</label>
    </ligand>
</feature>
<feature type="binding site" evidence="3">
    <location>
        <position position="84"/>
    </location>
    <ligand>
        <name>Ca(2+)</name>
        <dbReference type="ChEBI" id="CHEBI:29108"/>
        <label>1</label>
    </ligand>
</feature>
<feature type="binding site" evidence="3">
    <location>
        <position position="109"/>
    </location>
    <ligand>
        <name>Ca(2+)</name>
        <dbReference type="ChEBI" id="CHEBI:29108"/>
        <label>2</label>
    </ligand>
</feature>
<feature type="binding site" evidence="3">
    <location>
        <position position="111"/>
    </location>
    <ligand>
        <name>Ca(2+)</name>
        <dbReference type="ChEBI" id="CHEBI:29108"/>
        <label>2</label>
    </ligand>
</feature>
<feature type="binding site" evidence="3">
    <location>
        <position position="113"/>
    </location>
    <ligand>
        <name>Ca(2+)</name>
        <dbReference type="ChEBI" id="CHEBI:29108"/>
        <label>2</label>
    </ligand>
</feature>
<feature type="binding site" evidence="3">
    <location>
        <position position="115"/>
    </location>
    <ligand>
        <name>Ca(2+)</name>
        <dbReference type="ChEBI" id="CHEBI:29108"/>
        <label>2</label>
    </ligand>
</feature>
<feature type="binding site" evidence="3">
    <location>
        <position position="120"/>
    </location>
    <ligand>
        <name>Ca(2+)</name>
        <dbReference type="ChEBI" id="CHEBI:29108"/>
        <label>2</label>
    </ligand>
</feature>
<feature type="binding site" evidence="3">
    <location>
        <position position="157"/>
    </location>
    <ligand>
        <name>Ca(2+)</name>
        <dbReference type="ChEBI" id="CHEBI:29108"/>
        <label>3</label>
    </ligand>
</feature>
<feature type="binding site" evidence="3">
    <location>
        <position position="159"/>
    </location>
    <ligand>
        <name>Ca(2+)</name>
        <dbReference type="ChEBI" id="CHEBI:29108"/>
        <label>3</label>
    </ligand>
</feature>
<feature type="binding site" evidence="3">
    <location>
        <position position="161"/>
    </location>
    <ligand>
        <name>Ca(2+)</name>
        <dbReference type="ChEBI" id="CHEBI:29108"/>
        <label>3</label>
    </ligand>
</feature>
<feature type="binding site" evidence="3">
    <location>
        <position position="163"/>
    </location>
    <ligand>
        <name>Ca(2+)</name>
        <dbReference type="ChEBI" id="CHEBI:29108"/>
        <label>3</label>
    </ligand>
</feature>
<feature type="binding site" evidence="3">
    <location>
        <position position="168"/>
    </location>
    <ligand>
        <name>Ca(2+)</name>
        <dbReference type="ChEBI" id="CHEBI:29108"/>
        <label>3</label>
    </ligand>
</feature>
<feature type="lipid moiety-binding region" description="N-myristoyl glycine" evidence="2">
    <location>
        <position position="2"/>
    </location>
</feature>
<accession>P62749</accession>
<accession>P35333</accession>
<name>HPCL1_RAT</name>
<protein>
    <recommendedName>
        <fullName>Hippocalcin-like protein 1</fullName>
    </recommendedName>
    <alternativeName>
        <fullName>Neural visinin-like protein 3</fullName>
        <shortName>NVL-3</shortName>
        <shortName>NVP-3</shortName>
    </alternativeName>
    <alternativeName>
        <fullName>Visinin-like protein 3</fullName>
        <shortName>VILIP-3</shortName>
    </alternativeName>
</protein>
<dbReference type="EMBL" id="D13126">
    <property type="protein sequence ID" value="BAA02428.1"/>
    <property type="molecule type" value="mRNA"/>
</dbReference>
<dbReference type="EMBL" id="BC088759">
    <property type="protein sequence ID" value="AAH88759.1"/>
    <property type="molecule type" value="mRNA"/>
</dbReference>
<dbReference type="PIR" id="JH0816">
    <property type="entry name" value="JH0816"/>
</dbReference>
<dbReference type="RefSeq" id="NP_001380981.1">
    <property type="nucleotide sequence ID" value="NM_001394052.1"/>
</dbReference>
<dbReference type="RefSeq" id="NP_001380982.1">
    <property type="nucleotide sequence ID" value="NM_001394053.1"/>
</dbReference>
<dbReference type="RefSeq" id="NP_059052.1">
    <property type="nucleotide sequence ID" value="NM_017356.3"/>
</dbReference>
<dbReference type="RefSeq" id="XP_006239976.1">
    <property type="nucleotide sequence ID" value="XM_006239914.3"/>
</dbReference>
<dbReference type="RefSeq" id="XP_008762828.1">
    <property type="nucleotide sequence ID" value="XM_008764606.2"/>
</dbReference>
<dbReference type="RefSeq" id="XP_017449815.1">
    <property type="nucleotide sequence ID" value="XM_017594326.1"/>
</dbReference>
<dbReference type="RefSeq" id="XP_017449816.1">
    <property type="nucleotide sequence ID" value="XM_017594327.1"/>
</dbReference>
<dbReference type="RefSeq" id="XP_038968701.1">
    <property type="nucleotide sequence ID" value="XM_039112773.2"/>
</dbReference>
<dbReference type="RefSeq" id="XP_063118423.1">
    <property type="nucleotide sequence ID" value="XM_063262353.1"/>
</dbReference>
<dbReference type="RefSeq" id="XP_063118424.1">
    <property type="nucleotide sequence ID" value="XM_063262354.1"/>
</dbReference>
<dbReference type="RefSeq" id="XP_063118425.1">
    <property type="nucleotide sequence ID" value="XM_063262355.1"/>
</dbReference>
<dbReference type="RefSeq" id="XP_063118426.1">
    <property type="nucleotide sequence ID" value="XM_063262356.1"/>
</dbReference>
<dbReference type="RefSeq" id="XP_063118427.1">
    <property type="nucleotide sequence ID" value="XM_063262357.1"/>
</dbReference>
<dbReference type="SMR" id="P62749"/>
<dbReference type="BioGRID" id="248435">
    <property type="interactions" value="1"/>
</dbReference>
<dbReference type="FunCoup" id="P62749">
    <property type="interactions" value="1902"/>
</dbReference>
<dbReference type="STRING" id="10116.ENSRNOP00000007374"/>
<dbReference type="iPTMnet" id="P62749"/>
<dbReference type="PhosphoSitePlus" id="P62749"/>
<dbReference type="jPOST" id="P62749"/>
<dbReference type="PaxDb" id="10116-ENSRNOP00000007374"/>
<dbReference type="Ensembl" id="ENSRNOT00000007374.7">
    <property type="protein sequence ID" value="ENSRNOP00000007374.3"/>
    <property type="gene ID" value="ENSRNOG00000005492.7"/>
</dbReference>
<dbReference type="GeneID" id="50871"/>
<dbReference type="KEGG" id="rno:50871"/>
<dbReference type="AGR" id="RGD:708375"/>
<dbReference type="CTD" id="3241"/>
<dbReference type="RGD" id="708375">
    <property type="gene designation" value="Hpcal1"/>
</dbReference>
<dbReference type="eggNOG" id="KOG0044">
    <property type="taxonomic scope" value="Eukaryota"/>
</dbReference>
<dbReference type="GeneTree" id="ENSGT00940000154645"/>
<dbReference type="HOGENOM" id="CLU_072366_1_0_1"/>
<dbReference type="InParanoid" id="P62749"/>
<dbReference type="OMA" id="RQHTEFN"/>
<dbReference type="OrthoDB" id="191686at2759"/>
<dbReference type="PhylomeDB" id="P62749"/>
<dbReference type="TreeFam" id="TF300009"/>
<dbReference type="PRO" id="PR:P62749"/>
<dbReference type="Proteomes" id="UP000002494">
    <property type="component" value="Chromosome 6"/>
</dbReference>
<dbReference type="Bgee" id="ENSRNOG00000005492">
    <property type="expression patterns" value="Expressed in cerebellum and 20 other cell types or tissues"/>
</dbReference>
<dbReference type="GO" id="GO:0016020">
    <property type="term" value="C:membrane"/>
    <property type="evidence" value="ECO:0007669"/>
    <property type="project" value="UniProtKB-SubCell"/>
</dbReference>
<dbReference type="GO" id="GO:0005509">
    <property type="term" value="F:calcium ion binding"/>
    <property type="evidence" value="ECO:0000318"/>
    <property type="project" value="GO_Central"/>
</dbReference>
<dbReference type="GO" id="GO:0001889">
    <property type="term" value="P:liver development"/>
    <property type="evidence" value="ECO:0007669"/>
    <property type="project" value="Ensembl"/>
</dbReference>
<dbReference type="GO" id="GO:0009966">
    <property type="term" value="P:regulation of signal transduction"/>
    <property type="evidence" value="ECO:0000318"/>
    <property type="project" value="GO_Central"/>
</dbReference>
<dbReference type="CDD" id="cd00051">
    <property type="entry name" value="EFh"/>
    <property type="match status" value="2"/>
</dbReference>
<dbReference type="FunFam" id="1.10.238.10:FF:000078">
    <property type="entry name" value="Hippocalcin-like 1"/>
    <property type="match status" value="1"/>
</dbReference>
<dbReference type="FunFam" id="1.10.238.10:FF:000072">
    <property type="entry name" value="Hippocalcin-like protein 1"/>
    <property type="match status" value="1"/>
</dbReference>
<dbReference type="Gene3D" id="1.10.238.10">
    <property type="entry name" value="EF-hand"/>
    <property type="match status" value="2"/>
</dbReference>
<dbReference type="InterPro" id="IPR011992">
    <property type="entry name" value="EF-hand-dom_pair"/>
</dbReference>
<dbReference type="InterPro" id="IPR018247">
    <property type="entry name" value="EF_Hand_1_Ca_BS"/>
</dbReference>
<dbReference type="InterPro" id="IPR002048">
    <property type="entry name" value="EF_hand_dom"/>
</dbReference>
<dbReference type="InterPro" id="IPR028846">
    <property type="entry name" value="Recoverin"/>
</dbReference>
<dbReference type="PANTHER" id="PTHR23055">
    <property type="entry name" value="CALCIUM BINDING PROTEINS"/>
    <property type="match status" value="1"/>
</dbReference>
<dbReference type="PANTHER" id="PTHR23055:SF79">
    <property type="entry name" value="HIPPOCALCIN-LIKE PROTEIN 1"/>
    <property type="match status" value="1"/>
</dbReference>
<dbReference type="Pfam" id="PF13499">
    <property type="entry name" value="EF-hand_7"/>
    <property type="match status" value="2"/>
</dbReference>
<dbReference type="PRINTS" id="PR00450">
    <property type="entry name" value="RECOVERIN"/>
</dbReference>
<dbReference type="SMART" id="SM00054">
    <property type="entry name" value="EFh"/>
    <property type="match status" value="3"/>
</dbReference>
<dbReference type="SUPFAM" id="SSF47473">
    <property type="entry name" value="EF-hand"/>
    <property type="match status" value="1"/>
</dbReference>
<dbReference type="PROSITE" id="PS00018">
    <property type="entry name" value="EF_HAND_1"/>
    <property type="match status" value="3"/>
</dbReference>
<dbReference type="PROSITE" id="PS50222">
    <property type="entry name" value="EF_HAND_2"/>
    <property type="match status" value="4"/>
</dbReference>
<proteinExistence type="evidence at protein level"/>
<sequence>MGKQNSKLRPEVLQDLREHTEFTDHELQEWYKGFLKDCPTGHLTVDEFKKIYANFFPYGDASKFAEHVFRTFDTNSDGTIDFREFIIALSVTSRGKLEQKLKWAFSMYDLDGNGYISRSEMLEIVQAIYKMVSSVMKMPEDESTPEKRTDKIFRQMDTNNDGKLSLEEFIKGAKSDPSIVRLLQCDPSSASQF</sequence>
<keyword id="KW-0106">Calcium</keyword>
<keyword id="KW-0903">Direct protein sequencing</keyword>
<keyword id="KW-0449">Lipoprotein</keyword>
<keyword id="KW-0472">Membrane</keyword>
<keyword id="KW-0479">Metal-binding</keyword>
<keyword id="KW-0519">Myristate</keyword>
<keyword id="KW-1185">Reference proteome</keyword>
<keyword id="KW-0677">Repeat</keyword>